<keyword id="KW-0030">Aminoacyl-tRNA synthetase</keyword>
<keyword id="KW-0067">ATP-binding</keyword>
<keyword id="KW-0963">Cytoplasm</keyword>
<keyword id="KW-0436">Ligase</keyword>
<keyword id="KW-0547">Nucleotide-binding</keyword>
<keyword id="KW-0648">Protein biosynthesis</keyword>
<name>SYE_RHOPT</name>
<feature type="chain" id="PRO_1000090099" description="Glutamate--tRNA ligase">
    <location>
        <begin position="1"/>
        <end position="473"/>
    </location>
</feature>
<feature type="short sequence motif" description="'HIGH' region" evidence="1">
    <location>
        <begin position="11"/>
        <end position="21"/>
    </location>
</feature>
<feature type="short sequence motif" description="'KMSKS' region" evidence="1">
    <location>
        <begin position="240"/>
        <end position="244"/>
    </location>
</feature>
<feature type="binding site" evidence="1">
    <location>
        <position position="243"/>
    </location>
    <ligand>
        <name>ATP</name>
        <dbReference type="ChEBI" id="CHEBI:30616"/>
    </ligand>
</feature>
<comment type="function">
    <text evidence="1">Catalyzes the attachment of glutamate to tRNA(Glu) in a two-step reaction: glutamate is first activated by ATP to form Glu-AMP and then transferred to the acceptor end of tRNA(Glu).</text>
</comment>
<comment type="catalytic activity">
    <reaction evidence="1">
        <text>tRNA(Glu) + L-glutamate + ATP = L-glutamyl-tRNA(Glu) + AMP + diphosphate</text>
        <dbReference type="Rhea" id="RHEA:23540"/>
        <dbReference type="Rhea" id="RHEA-COMP:9663"/>
        <dbReference type="Rhea" id="RHEA-COMP:9680"/>
        <dbReference type="ChEBI" id="CHEBI:29985"/>
        <dbReference type="ChEBI" id="CHEBI:30616"/>
        <dbReference type="ChEBI" id="CHEBI:33019"/>
        <dbReference type="ChEBI" id="CHEBI:78442"/>
        <dbReference type="ChEBI" id="CHEBI:78520"/>
        <dbReference type="ChEBI" id="CHEBI:456215"/>
        <dbReference type="EC" id="6.1.1.17"/>
    </reaction>
</comment>
<comment type="subunit">
    <text evidence="1">Monomer.</text>
</comment>
<comment type="subcellular location">
    <subcellularLocation>
        <location evidence="1">Cytoplasm</location>
    </subcellularLocation>
</comment>
<comment type="similarity">
    <text evidence="1">Belongs to the class-I aminoacyl-tRNA synthetase family. Glutamate--tRNA ligase type 1 subfamily.</text>
</comment>
<organism>
    <name type="scientific">Rhodopseudomonas palustris (strain TIE-1)</name>
    <dbReference type="NCBI Taxonomy" id="395960"/>
    <lineage>
        <taxon>Bacteria</taxon>
        <taxon>Pseudomonadati</taxon>
        <taxon>Pseudomonadota</taxon>
        <taxon>Alphaproteobacteria</taxon>
        <taxon>Hyphomicrobiales</taxon>
        <taxon>Nitrobacteraceae</taxon>
        <taxon>Rhodopseudomonas</taxon>
    </lineage>
</organism>
<proteinExistence type="inferred from homology"/>
<dbReference type="EC" id="6.1.1.17" evidence="1"/>
<dbReference type="EMBL" id="CP001096">
    <property type="protein sequence ID" value="ACF01754.1"/>
    <property type="molecule type" value="Genomic_DNA"/>
</dbReference>
<dbReference type="RefSeq" id="WP_012496350.1">
    <property type="nucleotide sequence ID" value="NC_011004.1"/>
</dbReference>
<dbReference type="SMR" id="B3Q6P5"/>
<dbReference type="KEGG" id="rpt:Rpal_3252"/>
<dbReference type="HOGENOM" id="CLU_015768_6_3_5"/>
<dbReference type="OrthoDB" id="9807503at2"/>
<dbReference type="Proteomes" id="UP000001725">
    <property type="component" value="Chromosome"/>
</dbReference>
<dbReference type="GO" id="GO:0005829">
    <property type="term" value="C:cytosol"/>
    <property type="evidence" value="ECO:0007669"/>
    <property type="project" value="TreeGrafter"/>
</dbReference>
<dbReference type="GO" id="GO:0005524">
    <property type="term" value="F:ATP binding"/>
    <property type="evidence" value="ECO:0007669"/>
    <property type="project" value="UniProtKB-UniRule"/>
</dbReference>
<dbReference type="GO" id="GO:0004818">
    <property type="term" value="F:glutamate-tRNA ligase activity"/>
    <property type="evidence" value="ECO:0007669"/>
    <property type="project" value="UniProtKB-UniRule"/>
</dbReference>
<dbReference type="GO" id="GO:0000049">
    <property type="term" value="F:tRNA binding"/>
    <property type="evidence" value="ECO:0007669"/>
    <property type="project" value="InterPro"/>
</dbReference>
<dbReference type="GO" id="GO:0008270">
    <property type="term" value="F:zinc ion binding"/>
    <property type="evidence" value="ECO:0007669"/>
    <property type="project" value="InterPro"/>
</dbReference>
<dbReference type="GO" id="GO:0006424">
    <property type="term" value="P:glutamyl-tRNA aminoacylation"/>
    <property type="evidence" value="ECO:0007669"/>
    <property type="project" value="UniProtKB-UniRule"/>
</dbReference>
<dbReference type="CDD" id="cd00808">
    <property type="entry name" value="GluRS_core"/>
    <property type="match status" value="1"/>
</dbReference>
<dbReference type="FunFam" id="3.40.50.620:FF:000007">
    <property type="entry name" value="Glutamate--tRNA ligase"/>
    <property type="match status" value="1"/>
</dbReference>
<dbReference type="Gene3D" id="1.10.10.350">
    <property type="match status" value="1"/>
</dbReference>
<dbReference type="Gene3D" id="3.40.50.620">
    <property type="entry name" value="HUPs"/>
    <property type="match status" value="1"/>
</dbReference>
<dbReference type="HAMAP" id="MF_00022">
    <property type="entry name" value="Glu_tRNA_synth_type1"/>
    <property type="match status" value="1"/>
</dbReference>
<dbReference type="InterPro" id="IPR045462">
    <property type="entry name" value="aa-tRNA-synth_I_cd-bd"/>
</dbReference>
<dbReference type="InterPro" id="IPR020751">
    <property type="entry name" value="aa-tRNA-synth_I_codon-bd_sub2"/>
</dbReference>
<dbReference type="InterPro" id="IPR001412">
    <property type="entry name" value="aa-tRNA-synth_I_CS"/>
</dbReference>
<dbReference type="InterPro" id="IPR008925">
    <property type="entry name" value="aa_tRNA-synth_I_cd-bd_sf"/>
</dbReference>
<dbReference type="InterPro" id="IPR004527">
    <property type="entry name" value="Glu-tRNA-ligase_bac/mito"/>
</dbReference>
<dbReference type="InterPro" id="IPR000924">
    <property type="entry name" value="Glu/Gln-tRNA-synth"/>
</dbReference>
<dbReference type="InterPro" id="IPR020058">
    <property type="entry name" value="Glu/Gln-tRNA-synth_Ib_cat-dom"/>
</dbReference>
<dbReference type="InterPro" id="IPR049940">
    <property type="entry name" value="GluQ/Sye"/>
</dbReference>
<dbReference type="InterPro" id="IPR033910">
    <property type="entry name" value="GluRS_core"/>
</dbReference>
<dbReference type="InterPro" id="IPR014729">
    <property type="entry name" value="Rossmann-like_a/b/a_fold"/>
</dbReference>
<dbReference type="NCBIfam" id="TIGR00464">
    <property type="entry name" value="gltX_bact"/>
    <property type="match status" value="1"/>
</dbReference>
<dbReference type="PANTHER" id="PTHR43311">
    <property type="entry name" value="GLUTAMATE--TRNA LIGASE"/>
    <property type="match status" value="1"/>
</dbReference>
<dbReference type="PANTHER" id="PTHR43311:SF2">
    <property type="entry name" value="GLUTAMATE--TRNA LIGASE, MITOCHONDRIAL-RELATED"/>
    <property type="match status" value="1"/>
</dbReference>
<dbReference type="Pfam" id="PF19269">
    <property type="entry name" value="Anticodon_2"/>
    <property type="match status" value="1"/>
</dbReference>
<dbReference type="Pfam" id="PF00749">
    <property type="entry name" value="tRNA-synt_1c"/>
    <property type="match status" value="1"/>
</dbReference>
<dbReference type="PRINTS" id="PR00987">
    <property type="entry name" value="TRNASYNTHGLU"/>
</dbReference>
<dbReference type="SUPFAM" id="SSF48163">
    <property type="entry name" value="An anticodon-binding domain of class I aminoacyl-tRNA synthetases"/>
    <property type="match status" value="1"/>
</dbReference>
<dbReference type="SUPFAM" id="SSF52374">
    <property type="entry name" value="Nucleotidylyl transferase"/>
    <property type="match status" value="1"/>
</dbReference>
<dbReference type="PROSITE" id="PS00178">
    <property type="entry name" value="AA_TRNA_LIGASE_I"/>
    <property type="match status" value="1"/>
</dbReference>
<gene>
    <name evidence="1" type="primary">gltX</name>
    <name type="ordered locus">Rpal_3252</name>
</gene>
<accession>B3Q6P5</accession>
<protein>
    <recommendedName>
        <fullName evidence="1">Glutamate--tRNA ligase</fullName>
        <ecNumber evidence="1">6.1.1.17</ecNumber>
    </recommendedName>
    <alternativeName>
        <fullName evidence="1">Glutamyl-tRNA synthetase</fullName>
        <shortName evidence="1">GluRS</shortName>
    </alternativeName>
</protein>
<reference key="1">
    <citation type="submission" date="2008-05" db="EMBL/GenBank/DDBJ databases">
        <title>Complete sequence of Rhodopseudomonas palustris TIE-1.</title>
        <authorList>
            <consortium name="US DOE Joint Genome Institute"/>
            <person name="Lucas S."/>
            <person name="Copeland A."/>
            <person name="Lapidus A."/>
            <person name="Glavina del Rio T."/>
            <person name="Dalin E."/>
            <person name="Tice H."/>
            <person name="Pitluck S."/>
            <person name="Chain P."/>
            <person name="Malfatti S."/>
            <person name="Shin M."/>
            <person name="Vergez L."/>
            <person name="Lang D."/>
            <person name="Schmutz J."/>
            <person name="Larimer F."/>
            <person name="Land M."/>
            <person name="Hauser L."/>
            <person name="Kyrpides N."/>
            <person name="Mikhailova N."/>
            <person name="Emerson D."/>
            <person name="Newman D.K."/>
            <person name="Roden E."/>
            <person name="Richardson P."/>
        </authorList>
    </citation>
    <scope>NUCLEOTIDE SEQUENCE [LARGE SCALE GENOMIC DNA]</scope>
    <source>
        <strain>TIE-1</strain>
    </source>
</reference>
<evidence type="ECO:0000255" key="1">
    <source>
        <dbReference type="HAMAP-Rule" id="MF_00022"/>
    </source>
</evidence>
<sequence length="473" mass="52105">MTRPVVTRFAPSPTGFLHIGGGRTALFNWLYARKHGGTMLLRIEDTDRQRSTQEAIDAILDGLKWLGIDWDGATVYQFARAARHREVAEQLLAAGKAYRCYATAEELTAMRDKARAEGRAKLYDGSWRDRDPSEAPAGVKPTIRLKAPLTGETVIEDQVQGRVAWQNENLDDLVLLRGDGTPTYMLAVVVDDHDMGVTHVIRGDDHLINAARQKQIYDAMEWELPVMAHIPLIHGPDGSKLSKRHGALGVDAYRAMGYLPAALRNYLVRLGWSHGDQEIFTTQEMIDAFDLPAIGRSAARFDFAKLESLNGHYIRQSDDHSLVTLLEDLLKYIPQGPAIAAKFDDSIRAKLTQAMPGLKERAKTLIELLDNAGFIFADRPLALDPKAQAVLTPETRQLIGRLRAALEDVSPWTAATTEAAMRAFAEQAGLKLGAVAQPLRVALTGRTTSPGIFDVLAVLGRDECLSRLADQSA</sequence>